<accession>Q8NEZ3</accession>
<accession>B5MEF2</accession>
<accession>Q8N5B4</accession>
<accession>Q9H5S0</accession>
<accession>Q9HCD4</accession>
<name>WDR19_HUMAN</name>
<dbReference type="EMBL" id="AY029257">
    <property type="protein sequence ID" value="AAK38745.1"/>
    <property type="molecule type" value="mRNA"/>
</dbReference>
<dbReference type="EMBL" id="AK026780">
    <property type="protein sequence ID" value="BAB15550.1"/>
    <property type="molecule type" value="mRNA"/>
</dbReference>
<dbReference type="EMBL" id="AC093855">
    <property type="status" value="NOT_ANNOTATED_CDS"/>
    <property type="molecule type" value="Genomic_DNA"/>
</dbReference>
<dbReference type="EMBL" id="CH471069">
    <property type="protein sequence ID" value="EAW92921.1"/>
    <property type="molecule type" value="Genomic_DNA"/>
</dbReference>
<dbReference type="EMBL" id="BC032578">
    <property type="protein sequence ID" value="AAH32578.1"/>
    <property type="status" value="ALT_FRAME"/>
    <property type="molecule type" value="mRNA"/>
</dbReference>
<dbReference type="EMBL" id="AB046858">
    <property type="protein sequence ID" value="BAB13464.1"/>
    <property type="molecule type" value="mRNA"/>
</dbReference>
<dbReference type="CCDS" id="CCDS47042.1">
    <molecule id="Q8NEZ3-1"/>
</dbReference>
<dbReference type="RefSeq" id="NP_001304853.1">
    <property type="nucleotide sequence ID" value="NM_001317924.1"/>
</dbReference>
<dbReference type="RefSeq" id="NP_079408.3">
    <molecule id="Q8NEZ3-1"/>
    <property type="nucleotide sequence ID" value="NM_025132.3"/>
</dbReference>
<dbReference type="PDB" id="8BBF">
    <property type="method" value="EM"/>
    <property type="resolution" value="8.00 A"/>
    <property type="chains" value="A=1-1342"/>
</dbReference>
<dbReference type="PDB" id="8BBG">
    <property type="method" value="EM"/>
    <property type="resolution" value="3.50 A"/>
    <property type="chains" value="A=1-1342"/>
</dbReference>
<dbReference type="PDB" id="8FGW">
    <property type="method" value="EM"/>
    <property type="resolution" value="3.70 A"/>
    <property type="chains" value="C=1-1342"/>
</dbReference>
<dbReference type="PDB" id="8FH3">
    <property type="method" value="EM"/>
    <property type="resolution" value="4.30 A"/>
    <property type="chains" value="C=1-1342"/>
</dbReference>
<dbReference type="PDBsum" id="8BBF"/>
<dbReference type="PDBsum" id="8BBG"/>
<dbReference type="PDBsum" id="8FGW"/>
<dbReference type="PDBsum" id="8FH3"/>
<dbReference type="EMDB" id="EMD-15955"/>
<dbReference type="EMDB" id="EMD-29073"/>
<dbReference type="EMDB" id="EMD-29078"/>
<dbReference type="SMR" id="Q8NEZ3"/>
<dbReference type="BioGRID" id="121748">
    <property type="interactions" value="33"/>
</dbReference>
<dbReference type="ComplexPortal" id="CPX-5021">
    <property type="entry name" value="Intraflagellar transport complex A"/>
</dbReference>
<dbReference type="CORUM" id="Q8NEZ3"/>
<dbReference type="FunCoup" id="Q8NEZ3">
    <property type="interactions" value="509"/>
</dbReference>
<dbReference type="IntAct" id="Q8NEZ3">
    <property type="interactions" value="25"/>
</dbReference>
<dbReference type="MINT" id="Q8NEZ3"/>
<dbReference type="STRING" id="9606.ENSP00000382717"/>
<dbReference type="GlyGen" id="Q8NEZ3">
    <property type="glycosylation" value="1 site, 1 O-linked glycan (1 site)"/>
</dbReference>
<dbReference type="iPTMnet" id="Q8NEZ3"/>
<dbReference type="PhosphoSitePlus" id="Q8NEZ3"/>
<dbReference type="BioMuta" id="WDR19"/>
<dbReference type="DMDM" id="94730676"/>
<dbReference type="jPOST" id="Q8NEZ3"/>
<dbReference type="MassIVE" id="Q8NEZ3"/>
<dbReference type="PaxDb" id="9606-ENSP00000382717"/>
<dbReference type="PeptideAtlas" id="Q8NEZ3"/>
<dbReference type="ProteomicsDB" id="73250">
    <molecule id="Q8NEZ3-1"/>
</dbReference>
<dbReference type="ProteomicsDB" id="73251">
    <molecule id="Q8NEZ3-2"/>
</dbReference>
<dbReference type="Pumba" id="Q8NEZ3"/>
<dbReference type="Antibodypedia" id="23402">
    <property type="antibodies" value="123 antibodies from 20 providers"/>
</dbReference>
<dbReference type="DNASU" id="57728"/>
<dbReference type="Ensembl" id="ENST00000399820.8">
    <molecule id="Q8NEZ3-1"/>
    <property type="protein sequence ID" value="ENSP00000382717.3"/>
    <property type="gene ID" value="ENSG00000157796.18"/>
</dbReference>
<dbReference type="GeneID" id="57728"/>
<dbReference type="KEGG" id="hsa:57728"/>
<dbReference type="MANE-Select" id="ENST00000399820.8">
    <property type="protein sequence ID" value="ENSP00000382717.3"/>
    <property type="RefSeq nucleotide sequence ID" value="NM_025132.4"/>
    <property type="RefSeq protein sequence ID" value="NP_079408.3"/>
</dbReference>
<dbReference type="UCSC" id="uc003gtv.3">
    <molecule id="Q8NEZ3-1"/>
    <property type="organism name" value="human"/>
</dbReference>
<dbReference type="AGR" id="HGNC:18340"/>
<dbReference type="CTD" id="57728"/>
<dbReference type="DisGeNET" id="57728"/>
<dbReference type="GeneCards" id="WDR19"/>
<dbReference type="GeneReviews" id="WDR19"/>
<dbReference type="HGNC" id="HGNC:18340">
    <property type="gene designation" value="WDR19"/>
</dbReference>
<dbReference type="HPA" id="ENSG00000157796">
    <property type="expression patterns" value="Low tissue specificity"/>
</dbReference>
<dbReference type="MalaCards" id="WDR19"/>
<dbReference type="MIM" id="608151">
    <property type="type" value="gene"/>
</dbReference>
<dbReference type="MIM" id="614376">
    <property type="type" value="phenotype"/>
</dbReference>
<dbReference type="MIM" id="614377">
    <property type="type" value="phenotype"/>
</dbReference>
<dbReference type="MIM" id="614378">
    <property type="type" value="phenotype"/>
</dbReference>
<dbReference type="MIM" id="616307">
    <property type="type" value="phenotype"/>
</dbReference>
<dbReference type="MIM" id="619867">
    <property type="type" value="phenotype"/>
</dbReference>
<dbReference type="neXtProt" id="NX_Q8NEZ3"/>
<dbReference type="OpenTargets" id="ENSG00000157796"/>
<dbReference type="Orphanet" id="1515">
    <property type="disease" value="Cranioectodermal dysplasia"/>
</dbReference>
<dbReference type="Orphanet" id="474">
    <property type="disease" value="Jeune syndrome"/>
</dbReference>
<dbReference type="Orphanet" id="93592">
    <property type="disease" value="Juvenile nephronophthisis"/>
</dbReference>
<dbReference type="Orphanet" id="3156">
    <property type="disease" value="Senior-Loken syndrome"/>
</dbReference>
<dbReference type="PharmGKB" id="PA38317"/>
<dbReference type="VEuPathDB" id="HostDB:ENSG00000157796"/>
<dbReference type="eggNOG" id="KOG2247">
    <property type="taxonomic scope" value="Eukaryota"/>
</dbReference>
<dbReference type="GeneTree" id="ENSGT00590000083165"/>
<dbReference type="HOGENOM" id="CLU_003002_2_0_1"/>
<dbReference type="InParanoid" id="Q8NEZ3"/>
<dbReference type="OMA" id="NDMLTHT"/>
<dbReference type="OrthoDB" id="10250638at2759"/>
<dbReference type="PAN-GO" id="Q8NEZ3">
    <property type="GO annotations" value="4 GO annotations based on evolutionary models"/>
</dbReference>
<dbReference type="PhylomeDB" id="Q8NEZ3"/>
<dbReference type="TreeFam" id="TF314758"/>
<dbReference type="PathwayCommons" id="Q8NEZ3"/>
<dbReference type="Reactome" id="R-HSA-5610787">
    <property type="pathway name" value="Hedgehog 'off' state"/>
</dbReference>
<dbReference type="Reactome" id="R-HSA-5620924">
    <property type="pathway name" value="Intraflagellar transport"/>
</dbReference>
<dbReference type="SignaLink" id="Q8NEZ3"/>
<dbReference type="BioGRID-ORCS" id="57728">
    <property type="hits" value="14 hits in 1159 CRISPR screens"/>
</dbReference>
<dbReference type="ChiTaRS" id="WDR19">
    <property type="organism name" value="human"/>
</dbReference>
<dbReference type="GenomeRNAi" id="57728"/>
<dbReference type="Pharos" id="Q8NEZ3">
    <property type="development level" value="Tbio"/>
</dbReference>
<dbReference type="PRO" id="PR:Q8NEZ3"/>
<dbReference type="Proteomes" id="UP000005640">
    <property type="component" value="Chromosome 4"/>
</dbReference>
<dbReference type="RNAct" id="Q8NEZ3">
    <property type="molecule type" value="protein"/>
</dbReference>
<dbReference type="Bgee" id="ENSG00000157796">
    <property type="expression patterns" value="Expressed in right uterine tube and 179 other cell types or tissues"/>
</dbReference>
<dbReference type="ExpressionAtlas" id="Q8NEZ3">
    <property type="expression patterns" value="baseline and differential"/>
</dbReference>
<dbReference type="GO" id="GO:0097542">
    <property type="term" value="C:ciliary tip"/>
    <property type="evidence" value="ECO:0000304"/>
    <property type="project" value="Reactome"/>
</dbReference>
<dbReference type="GO" id="GO:0005929">
    <property type="term" value="C:cilium"/>
    <property type="evidence" value="ECO:0000318"/>
    <property type="project" value="GO_Central"/>
</dbReference>
<dbReference type="GO" id="GO:0005737">
    <property type="term" value="C:cytoplasm"/>
    <property type="evidence" value="ECO:0007669"/>
    <property type="project" value="UniProtKB-KW"/>
</dbReference>
<dbReference type="GO" id="GO:0005856">
    <property type="term" value="C:cytoskeleton"/>
    <property type="evidence" value="ECO:0007669"/>
    <property type="project" value="UniProtKB-KW"/>
</dbReference>
<dbReference type="GO" id="GO:0030991">
    <property type="term" value="C:intraciliary transport particle A"/>
    <property type="evidence" value="ECO:0000314"/>
    <property type="project" value="UniProtKB"/>
</dbReference>
<dbReference type="GO" id="GO:0031514">
    <property type="term" value="C:motile cilium"/>
    <property type="evidence" value="ECO:0000250"/>
    <property type="project" value="UniProtKB"/>
</dbReference>
<dbReference type="GO" id="GO:0097730">
    <property type="term" value="C:non-motile cilium"/>
    <property type="evidence" value="ECO:0000250"/>
    <property type="project" value="UniProtKB"/>
</dbReference>
<dbReference type="GO" id="GO:0032391">
    <property type="term" value="C:photoreceptor connecting cilium"/>
    <property type="evidence" value="ECO:0000250"/>
    <property type="project" value="UniProtKB"/>
</dbReference>
<dbReference type="GO" id="GO:0001750">
    <property type="term" value="C:photoreceptor outer segment"/>
    <property type="evidence" value="ECO:0007669"/>
    <property type="project" value="UniProtKB-SubCell"/>
</dbReference>
<dbReference type="GO" id="GO:0005886">
    <property type="term" value="C:plasma membrane"/>
    <property type="evidence" value="ECO:0007669"/>
    <property type="project" value="GOC"/>
</dbReference>
<dbReference type="GO" id="GO:0000902">
    <property type="term" value="P:cell morphogenesis"/>
    <property type="evidence" value="ECO:0007669"/>
    <property type="project" value="Ensembl"/>
</dbReference>
<dbReference type="GO" id="GO:0060271">
    <property type="term" value="P:cilium assembly"/>
    <property type="evidence" value="ECO:0000303"/>
    <property type="project" value="ComplexPortal"/>
</dbReference>
<dbReference type="GO" id="GO:0055123">
    <property type="term" value="P:digestive system development"/>
    <property type="evidence" value="ECO:0007669"/>
    <property type="project" value="Ensembl"/>
</dbReference>
<dbReference type="GO" id="GO:0042471">
    <property type="term" value="P:ear morphogenesis"/>
    <property type="evidence" value="ECO:0007669"/>
    <property type="project" value="Ensembl"/>
</dbReference>
<dbReference type="GO" id="GO:0031076">
    <property type="term" value="P:embryonic camera-type eye development"/>
    <property type="evidence" value="ECO:0007669"/>
    <property type="project" value="Ensembl"/>
</dbReference>
<dbReference type="GO" id="GO:0048701">
    <property type="term" value="P:embryonic cranial skeleton morphogenesis"/>
    <property type="evidence" value="ECO:0007669"/>
    <property type="project" value="Ensembl"/>
</dbReference>
<dbReference type="GO" id="GO:0030326">
    <property type="term" value="P:embryonic limb morphogenesis"/>
    <property type="evidence" value="ECO:0007669"/>
    <property type="project" value="Ensembl"/>
</dbReference>
<dbReference type="GO" id="GO:0008406">
    <property type="term" value="P:gonad development"/>
    <property type="evidence" value="ECO:0007669"/>
    <property type="project" value="Ensembl"/>
</dbReference>
<dbReference type="GO" id="GO:0001701">
    <property type="term" value="P:in utero embryonic development"/>
    <property type="evidence" value="ECO:0007669"/>
    <property type="project" value="Ensembl"/>
</dbReference>
<dbReference type="GO" id="GO:0035721">
    <property type="term" value="P:intraciliary retrograde transport"/>
    <property type="evidence" value="ECO:0000315"/>
    <property type="project" value="MGI"/>
</dbReference>
<dbReference type="GO" id="GO:0061055">
    <property type="term" value="P:myotome development"/>
    <property type="evidence" value="ECO:0007669"/>
    <property type="project" value="Ensembl"/>
</dbReference>
<dbReference type="GO" id="GO:0050877">
    <property type="term" value="P:nervous system process"/>
    <property type="evidence" value="ECO:0007669"/>
    <property type="project" value="Ensembl"/>
</dbReference>
<dbReference type="GO" id="GO:1903441">
    <property type="term" value="P:protein localization to ciliary membrane"/>
    <property type="evidence" value="ECO:0000315"/>
    <property type="project" value="UniProtKB"/>
</dbReference>
<dbReference type="GO" id="GO:0065003">
    <property type="term" value="P:protein-containing complex assembly"/>
    <property type="evidence" value="ECO:0000315"/>
    <property type="project" value="UniProtKB"/>
</dbReference>
<dbReference type="GO" id="GO:0043113">
    <property type="term" value="P:receptor clustering"/>
    <property type="evidence" value="ECO:0007669"/>
    <property type="project" value="Ensembl"/>
</dbReference>
<dbReference type="GO" id="GO:0060831">
    <property type="term" value="P:smoothened signaling pathway involved in dorsal/ventral neural tube patterning"/>
    <property type="evidence" value="ECO:0007669"/>
    <property type="project" value="Ensembl"/>
</dbReference>
<dbReference type="FunFam" id="2.130.10.10:FF:000242">
    <property type="entry name" value="WD repeat domain 19, isoform CRA_a"/>
    <property type="match status" value="1"/>
</dbReference>
<dbReference type="FunFam" id="1.25.40.470:FF:000006">
    <property type="entry name" value="WD repeat-containing protein 19 isoform X1"/>
    <property type="match status" value="1"/>
</dbReference>
<dbReference type="FunFam" id="1.25.40.470:FF:000009">
    <property type="entry name" value="WD repeat-containing protein 19 isoform X1"/>
    <property type="match status" value="1"/>
</dbReference>
<dbReference type="Gene3D" id="1.25.40.470">
    <property type="match status" value="2"/>
</dbReference>
<dbReference type="Gene3D" id="2.130.10.10">
    <property type="entry name" value="YVTN repeat-like/Quinoprotein amine dehydrogenase"/>
    <property type="match status" value="1"/>
</dbReference>
<dbReference type="InterPro" id="IPR011990">
    <property type="entry name" value="TPR-like_helical_dom_sf"/>
</dbReference>
<dbReference type="InterPro" id="IPR056168">
    <property type="entry name" value="TPR_IF140/IFT172/WDR19"/>
</dbReference>
<dbReference type="InterPro" id="IPR015943">
    <property type="entry name" value="WD40/YVTN_repeat-like_dom_sf"/>
</dbReference>
<dbReference type="InterPro" id="IPR001680">
    <property type="entry name" value="WD40_rpt"/>
</dbReference>
<dbReference type="InterPro" id="IPR040379">
    <property type="entry name" value="WDR19/dyf-2"/>
</dbReference>
<dbReference type="InterPro" id="IPR039468">
    <property type="entry name" value="WDR19_WD40_rpt"/>
</dbReference>
<dbReference type="InterPro" id="IPR056170">
    <property type="entry name" value="Znf_IFT121-like"/>
</dbReference>
<dbReference type="PANTHER" id="PTHR14920">
    <property type="entry name" value="OSMOTIC AVOIDANCE ABNORMAL PROTEIN 1/WD REPEAT MEMBRANE PROTEIN"/>
    <property type="match status" value="1"/>
</dbReference>
<dbReference type="PANTHER" id="PTHR14920:SF2">
    <property type="entry name" value="WD REPEAT-CONTAINING PROTEIN 19"/>
    <property type="match status" value="1"/>
</dbReference>
<dbReference type="Pfam" id="PF23389">
    <property type="entry name" value="Beta-prop_WDR19_1st"/>
    <property type="match status" value="1"/>
</dbReference>
<dbReference type="Pfam" id="PF15911">
    <property type="entry name" value="Beta-prop_WDR19_2nd"/>
    <property type="match status" value="1"/>
</dbReference>
<dbReference type="Pfam" id="PF24762">
    <property type="entry name" value="TPR_IF140-IFT172"/>
    <property type="match status" value="1"/>
</dbReference>
<dbReference type="Pfam" id="PF23145">
    <property type="entry name" value="Zf_2nd_IFT121"/>
    <property type="match status" value="1"/>
</dbReference>
<dbReference type="Pfam" id="PF23146">
    <property type="entry name" value="Zf_IFT144_1st"/>
    <property type="match status" value="1"/>
</dbReference>
<dbReference type="SMART" id="SM00320">
    <property type="entry name" value="WD40"/>
    <property type="match status" value="5"/>
</dbReference>
<dbReference type="SUPFAM" id="SSF82171">
    <property type="entry name" value="DPP6 N-terminal domain-like"/>
    <property type="match status" value="1"/>
</dbReference>
<dbReference type="SUPFAM" id="SSF48452">
    <property type="entry name" value="TPR-like"/>
    <property type="match status" value="1"/>
</dbReference>
<dbReference type="SUPFAM" id="SSF69322">
    <property type="entry name" value="Tricorn protease domain 2"/>
    <property type="match status" value="1"/>
</dbReference>
<dbReference type="PROSITE" id="PS50294">
    <property type="entry name" value="WD_REPEATS_REGION"/>
    <property type="match status" value="1"/>
</dbReference>
<organism>
    <name type="scientific">Homo sapiens</name>
    <name type="common">Human</name>
    <dbReference type="NCBI Taxonomy" id="9606"/>
    <lineage>
        <taxon>Eukaryota</taxon>
        <taxon>Metazoa</taxon>
        <taxon>Chordata</taxon>
        <taxon>Craniata</taxon>
        <taxon>Vertebrata</taxon>
        <taxon>Euteleostomi</taxon>
        <taxon>Mammalia</taxon>
        <taxon>Eutheria</taxon>
        <taxon>Euarchontoglires</taxon>
        <taxon>Primates</taxon>
        <taxon>Haplorrhini</taxon>
        <taxon>Catarrhini</taxon>
        <taxon>Hominidae</taxon>
        <taxon>Homo</taxon>
    </lineage>
</organism>
<sequence length="1342" mass="151581">MKRIFSLLEKTWLGAPIQFAWQKTSGNYLAVTGADYIVKIFDRHGQKRSEINLPGNCVAMDWDKDGDVLAVIAEKSSCIYLWDANTNKTSQLDNGMRDQMSFLLWSKVGSFLAVGTVKGNLLIYNHQTSRKIPVLGKHTKRITCGCWNAENLLALGGEDKMITVSNQEGDTIRQTQVRSEPSNMQFFLMKMDDRTSAAESMISVVLGKKTLFFLNLNEPDNPADLEFQQDFGNIVCYNWYGDGRIMIGFSCGHFVVISTHTGELGQEIFQARNHKDNLTSIAVSQTLNKVATCGDNCIKIQDLVDLKDMYVILNLDEENKGLGTLSWTDDGQLLALSTQRGSLHVFLTKLPILGDACSTRIAYLTSLLEVTVANPVEGELPITVSVDVEPNFVAVGLYHLAVGMNNRAWFYVLGENAVKKLKDMEYLGTVASICLHSDYAAALFEGKVQLHLIESEILDAQEERETRLFPAVDDKCRILCHALTSDFLIYGTDTGVVQYFYIEDWQFVNDYRHPVSVKKIFPDPNGTRLVFIDEKSDGFVYCPVNDATYEIPDFSPTIKGVLWENWPMDKGVFIAYDDDKVYTYVFHKDTIQGAKVILAGSTKVPFAHKPLLLYNGELTCQTQSGKVNNIYLSTHGFLSNLKDTGPDELRPMLAQNLMLKRFSDAWEMCRILNDEAAWNELARACLHHMEVEFAIRVYRRIGNVGIVMSLEQIKGIEDYNLLAGHLAMFTNDYNLAQDLYLASSCPIAALEMRRDLQHWDSALQLAKHLAPDQIPFISKEYAIQLEFAGDYVNALAHYEKGITGDNKEHDEACLAGVAQMSIRMGDIRRGVNQALKHPSRVLKRDCGAILENMKQFSEAAQLYEKGLYYDKAASVYIRSKNWAKVGDLLPHVSSPKIHLQYAKAKEADGRYKEAVVAYENAKQWQSVIRIYLDHLNNPEKAVNIVRETQSLDGAKMVARFFLQLGDYGSAIQFLVMSKCNNEAFTLAQQHNKMEIYADIIGSEDTTNEDYQSIALYFEGEKRYLQAGKFFLLCGQYSRALKHFLKCPSSEDNVAIEMAIETVGQAKDELLTNQLIDHLLGENDGMPKDAKYLFRLYMALKQYREAAQTAIIIAREEQSAGNYRNAHDVLFSMYAELKSQKIKIPSEMATNLMILHSYILVKIHVKNGDHMKGARMLIRVANNISKFPSHIVPILTSTVIECHRAGLKNSAFSFAAMLMRPEYRSKIDAKYKKKIEGMVRRPDISEIEEATTPCPFCKFLLPECELLCPGCKNSIPYCIATGRHMLKDDWTVCPHCDFPALYSELKIMLNTESTCPMCSERLNAAQLKKISDCTQYLRTEEEL</sequence>
<comment type="function">
    <text evidence="1 3">As component of the IFT complex A (IFT-A), a complex required for retrograde ciliary transport and entry into cilia of G protein-coupled receptors (GPCRs), it is involved in cilia function and/or assembly (PubMed:20889716). Essential for functional IFT-A assembly and ciliary entry of GPCRs (PubMed:20889716). Associates with the BBSome complex to mediate ciliary transport (By similarity).</text>
</comment>
<comment type="subunit">
    <text evidence="1 3 7 8 9">Component of the IFT complex A (IFT-A) complex (PubMed:20889716, PubMed:27932497). IFT-A complex is divided into a core subcomplex composed of IFT122:IFT140:WDR19 which is associated with TULP3 and a peripheral subcomplex composed of IFT43:WDR35:TTC21B (PubMed:27932497, PubMed:29220510). Interacts (via C-terminal region) with IFT122 (via C-terminal region) (PubMed:29220510). Interacts with BBS1 (By similarity). Interacts with TTC25 (PubMed:25860617).</text>
</comment>
<comment type="interaction">
    <interactant intactId="EBI-11903679">
        <id>Q8NEZ3</id>
    </interactant>
    <interactant intactId="EBI-2805994">
        <id>Q9HBG6</id>
        <label>IFT122</label>
    </interactant>
    <organismsDiffer>false</organismsDiffer>
    <experiments>6</experiments>
</comment>
<comment type="interaction">
    <interactant intactId="EBI-11903679">
        <id>Q8NEZ3</id>
    </interactant>
    <interactant intactId="EBI-308494">
        <id>Q96RY7</id>
        <label>IFT140</label>
    </interactant>
    <organismsDiffer>false</organismsDiffer>
    <experiments>8</experiments>
</comment>
<comment type="subcellular location">
    <subcellularLocation>
        <location evidence="1">Cell projection</location>
        <location evidence="1">Cilium</location>
    </subcellularLocation>
    <subcellularLocation>
        <location evidence="1">Cytoplasm</location>
        <location evidence="1">Cytoskeleton</location>
        <location evidence="1">Cilium basal body</location>
    </subcellularLocation>
    <subcellularLocation>
        <location evidence="1">Cell projection</location>
        <location evidence="1">Cilium</location>
        <location evidence="1">Photoreceptor outer segment</location>
    </subcellularLocation>
    <subcellularLocation>
        <location evidence="10">Cell projection</location>
        <location evidence="10">Cilium</location>
        <location evidence="10">Flagellum</location>
    </subcellularLocation>
    <text evidence="1 10">Localizes to photoreceptor connecting cilia, to the base of motile cilia in brain ependymal cells and to the base of and along primary cilia in kidney cells. Localizes at the sperm neck and flagellum (PubMed:32323121).</text>
</comment>
<comment type="alternative products">
    <event type="alternative splicing"/>
    <isoform>
        <id>Q8NEZ3-1</id>
        <name>1</name>
        <sequence type="displayed"/>
    </isoform>
    <isoform>
        <id>Q8NEZ3-2</id>
        <name>2</name>
        <sequence type="described" ref="VSP_018073 VSP_018074"/>
    </isoform>
</comment>
<comment type="tissue specificity">
    <text evidence="2">Some isoforms are tissue-specific. Highly expressed in the prostate. Lower expression in the cerebellum, pituitary gland, fetal lung, and pancreas. In normal prostate, expressed in both basal and luminal epithelial cells. No expression detected in fibromuscular stromal cells, endothelial cells, or infiltrating lymphocytes. Uniformed expression in prostate adenocarcinoma cells.</text>
</comment>
<comment type="developmental stage">
    <text>Expressed in fetal lung.</text>
</comment>
<comment type="induction">
    <text evidence="2">By androgenic hormones. Expression increased 3-fold in an androgen-stimulated androgen-sensitive prostate adenocarcinoma cell line compared with androgen-deprived cells.</text>
</comment>
<comment type="disease" evidence="4">
    <disease id="DI-03327">
        <name>Cranioectodermal dysplasia 4</name>
        <acronym>CED4</acronym>
        <description>A disorder primarily characterized by craniofacial, skeletal and ectodermal abnormalities. Clinical features include craniosynostosis, narrow rib cage, short limbs, brachydactyly, hypoplastic and widely spaced teeth, sparse hair, skin laxity and abnormal nails. Nephronophthisis leading to progressive renal failure, hepatic fibrosis, heart defects, and retinitis pigmentosa have also been described.</description>
        <dbReference type="MIM" id="614378"/>
    </disease>
    <text>The disease is caused by variants affecting the gene represented in this entry.</text>
</comment>
<comment type="disease" evidence="4">
    <disease id="DI-03325">
        <name>Short-rib thoracic dysplasia 5 with or without polydactyly</name>
        <acronym>SRTD5</acronym>
        <description>A form of short-rib thoracic dysplasia, a group of autosomal recessive ciliopathies that are characterized by a constricted thoracic cage, short ribs, shortened tubular bones, and a 'trident' appearance of the acetabular roof. Polydactyly is variably present. Non-skeletal involvement can include cleft lip/palate as well as anomalies of major organs such as the brain, eye, heart, kidneys, liver, pancreas, intestines, and genitalia. Some forms of the disease are lethal in the neonatal period due to respiratory insufficiency secondary to a severely restricted thoracic cage, whereas others are compatible with life. Disease spectrum encompasses Ellis-van Creveld syndrome, asphyxiating thoracic dystrophy (Jeune syndrome), Mainzer-Saldino syndrome, and short rib-polydactyly syndrome.</description>
        <dbReference type="MIM" id="614376"/>
    </disease>
    <text>The disease is caused by variants affecting the gene represented in this entry.</text>
</comment>
<comment type="disease" evidence="4">
    <disease id="DI-03326">
        <name>Nephronophthisis 13</name>
        <acronym>NPHP13</acronym>
        <description>An autosomal recessive disorder resulting in end-stage renal disease. It is a progressive tubulo-interstitial kidney disorder histologically characterized by modifications of the tubules with thickening of the basement membrane, interstitial fibrosis and, in the advanced stages, medullary cysts.</description>
        <dbReference type="MIM" id="614377"/>
    </disease>
    <text>The disease is caused by variants affecting the gene represented in this entry.</text>
</comment>
<comment type="disease" evidence="5 6">
    <disease id="DI-04390">
        <name>Senior-Loken syndrome 8</name>
        <acronym>SLSN8</acronym>
        <description>A renal-retinal disorder characterized by progressive wasting of the filtering unit of the kidney (nephronophthisis), with or without medullary cystic renal disease, and progressive eye disease. Typically this disorder becomes apparent during the first year of life.</description>
        <dbReference type="MIM" id="616307"/>
    </disease>
    <text>The disease is caused by variants affecting the gene represented in this entry.</text>
</comment>
<comment type="disease" evidence="10">
    <disease id="DI-06415">
        <name>Spermatogenic failure 72</name>
        <acronym>SPGF72</acronym>
        <description>An autosomal recessive male infertility disorder characterized by asthenoteratospermia and multiple morphologic abnormalities of the flagella, including coiled, short, angulated, absent, and irregular-caliber flagella, resulting in absent sperm motility.</description>
        <dbReference type="MIM" id="619867"/>
    </disease>
    <text>The disease may be caused by variants affecting the gene represented in this entry.</text>
</comment>
<comment type="sequence caution" evidence="15">
    <conflict type="frameshift">
        <sequence resource="EMBL-CDS" id="AAH32578"/>
    </conflict>
</comment>
<feature type="chain" id="PRO_0000233156" description="WD repeat-containing protein 19">
    <location>
        <begin position="1"/>
        <end position="1342"/>
    </location>
</feature>
<feature type="repeat" description="WD 1">
    <location>
        <begin position="11"/>
        <end position="51"/>
    </location>
</feature>
<feature type="repeat" description="WD 2">
    <location>
        <begin position="52"/>
        <end position="92"/>
    </location>
</feature>
<feature type="repeat" description="WD 3">
    <location>
        <begin position="95"/>
        <end position="134"/>
    </location>
</feature>
<feature type="repeat" description="WD 4">
    <location>
        <begin position="137"/>
        <end position="175"/>
    </location>
</feature>
<feature type="repeat" description="WD 5">
    <location>
        <begin position="273"/>
        <end position="311"/>
    </location>
</feature>
<feature type="repeat" description="WD 6">
    <location>
        <begin position="317"/>
        <end position="356"/>
    </location>
</feature>
<feature type="repeat" description="TPR 1">
    <location>
        <begin position="736"/>
        <end position="769"/>
    </location>
</feature>
<feature type="repeat" description="TPR 2">
    <location>
        <begin position="775"/>
        <end position="808"/>
    </location>
</feature>
<feature type="repeat" description="TPR 3">
    <location>
        <begin position="840"/>
        <end position="873"/>
    </location>
</feature>
<feature type="repeat" description="TPR 4">
    <location>
        <begin position="895"/>
        <end position="928"/>
    </location>
</feature>
<feature type="repeat" description="TPR 5">
    <location>
        <begin position="951"/>
        <end position="984"/>
    </location>
</feature>
<feature type="repeat" description="TPR 6">
    <location>
        <begin position="1020"/>
        <end position="1053"/>
    </location>
</feature>
<feature type="splice variant" id="VSP_018073" description="In isoform 2." evidence="11 12">
    <original>IESEILDAQEERETRLFPAVDD</original>
    <variation>KAKSWMLTKNVRLGFSQQWMISAVSYAMP</variation>
    <location>
        <begin position="453"/>
        <end position="474"/>
    </location>
</feature>
<feature type="splice variant" id="VSP_018074" description="In isoform 2." evidence="11 12">
    <location>
        <begin position="475"/>
        <end position="1342"/>
    </location>
</feature>
<feature type="sequence variant" id="VAR_067312" description="In SRTD5; dbSNP:rs387906982." evidence="4">
    <original>L</original>
    <variation>P</variation>
    <location>
        <position position="7"/>
    </location>
</feature>
<feature type="sequence variant" id="VAR_073673" description="In SLSN8; dbSNP:rs776967770." evidence="6">
    <original>A</original>
    <variation>P</variation>
    <location>
        <position position="30"/>
    </location>
</feature>
<feature type="sequence variant" id="VAR_073674" description="In SLSN8; dbSNP:rs786204852." evidence="6">
    <original>V</original>
    <variation>D</variation>
    <location>
        <position position="68"/>
    </location>
</feature>
<feature type="sequence variant" id="VAR_073675" description="In SLSN8; dbSNP:rs766029437." evidence="6">
    <original>G</original>
    <variation>E</variation>
    <location>
        <position position="109"/>
    </location>
</feature>
<feature type="sequence variant" id="VAR_073676" description="In SLSN8; dbSNP:rs199812132." evidence="6">
    <original>R</original>
    <variation>C</variation>
    <location>
        <position position="272"/>
    </location>
</feature>
<feature type="sequence variant" id="VAR_067313" description="In NPHP13; dbSNP:rs387906983." evidence="4">
    <original>V</original>
    <variation>G</variation>
    <location>
        <position position="345"/>
    </location>
</feature>
<feature type="sequence variant" id="VAR_073677" description="In SLSN8; dbSNP:rs587777349." evidence="5 6">
    <original>D</original>
    <variation>H</variation>
    <location>
        <position position="493"/>
    </location>
</feature>
<feature type="sequence variant" id="VAR_067314" description="In CED4 and SLSN8; dbSNP:rs387906980." evidence="4 6">
    <original>L</original>
    <variation>S</variation>
    <location>
        <position position="710"/>
    </location>
</feature>
<feature type="sequence variant" id="VAR_053424" description="In dbSNP:rs16995209.">
    <original>G</original>
    <variation>S</variation>
    <location>
        <position position="1084"/>
    </location>
</feature>
<feature type="sequence variant" id="VAR_073678" description="In SLSN8; dbSNP:rs79436363." evidence="5">
    <original>R</original>
    <variation>Q</variation>
    <location>
        <position position="1178"/>
    </location>
</feature>
<feature type="sequence variant" id="VAR_073679" description="In SLSN8; dbSNP:rs587777351." evidence="5">
    <original>E</original>
    <variation>K</variation>
    <location>
        <position position="1235"/>
    </location>
</feature>
<feature type="sequence variant" id="VAR_087243" description="In SPGF72; uncertain significance; the mutant is absent from sperm neck and flagellum; dbSNP:rs2109521864." evidence="10">
    <original>K</original>
    <variation>E</variation>
    <location>
        <position position="1271"/>
    </location>
</feature>
<feature type="sequence conflict" description="In Ref. 1; AAK38745." evidence="15" ref="1">
    <original>Q</original>
    <variation>K</variation>
    <location>
        <position position="22"/>
    </location>
</feature>
<feature type="sequence conflict" description="In Ref. 2; BAB15550." evidence="15" ref="2">
    <original>L</original>
    <variation>V</variation>
    <location>
        <position position="122"/>
    </location>
</feature>
<feature type="sequence conflict" description="In Ref. 2; BAB15550." evidence="15" ref="2">
    <original>L</original>
    <variation>P</variation>
    <location>
        <position position="153"/>
    </location>
</feature>
<feature type="strand" evidence="17">
    <location>
        <begin position="2"/>
        <end position="7"/>
    </location>
</feature>
<feature type="helix" evidence="17">
    <location>
        <begin position="10"/>
        <end position="12"/>
    </location>
</feature>
<feature type="strand" evidence="17">
    <location>
        <begin position="18"/>
        <end position="21"/>
    </location>
</feature>
<feature type="turn" evidence="17">
    <location>
        <begin position="23"/>
        <end position="25"/>
    </location>
</feature>
<feature type="strand" evidence="17">
    <location>
        <begin position="28"/>
        <end position="32"/>
    </location>
</feature>
<feature type="strand" evidence="17">
    <location>
        <begin position="36"/>
        <end position="42"/>
    </location>
</feature>
<feature type="strand" evidence="17">
    <location>
        <begin position="47"/>
        <end position="52"/>
    </location>
</feature>
<feature type="strand" evidence="17">
    <location>
        <begin position="57"/>
        <end position="62"/>
    </location>
</feature>
<feature type="strand" evidence="17">
    <location>
        <begin position="66"/>
        <end position="73"/>
    </location>
</feature>
<feature type="strand" evidence="17">
    <location>
        <begin position="78"/>
        <end position="83"/>
    </location>
</feature>
<feature type="turn" evidence="17">
    <location>
        <begin position="84"/>
        <end position="86"/>
    </location>
</feature>
<feature type="strand" evidence="17">
    <location>
        <begin position="89"/>
        <end position="93"/>
    </location>
</feature>
<feature type="strand" evidence="17">
    <location>
        <begin position="96"/>
        <end position="98"/>
    </location>
</feature>
<feature type="strand" evidence="17">
    <location>
        <begin position="100"/>
        <end position="105"/>
    </location>
</feature>
<feature type="strand" evidence="17">
    <location>
        <begin position="107"/>
        <end position="116"/>
    </location>
</feature>
<feature type="strand" evidence="17">
    <location>
        <begin position="121"/>
        <end position="125"/>
    </location>
</feature>
<feature type="turn" evidence="17">
    <location>
        <begin position="126"/>
        <end position="128"/>
    </location>
</feature>
<feature type="strand" evidence="17">
    <location>
        <begin position="131"/>
        <end position="134"/>
    </location>
</feature>
<feature type="strand" evidence="17">
    <location>
        <begin position="137"/>
        <end position="140"/>
    </location>
</feature>
<feature type="strand" evidence="17">
    <location>
        <begin position="142"/>
        <end position="147"/>
    </location>
</feature>
<feature type="strand" evidence="17">
    <location>
        <begin position="153"/>
        <end position="157"/>
    </location>
</feature>
<feature type="strand" evidence="17">
    <location>
        <begin position="160"/>
        <end position="165"/>
    </location>
</feature>
<feature type="strand" evidence="17">
    <location>
        <begin position="171"/>
        <end position="176"/>
    </location>
</feature>
<feature type="strand" evidence="17">
    <location>
        <begin position="181"/>
        <end position="187"/>
    </location>
</feature>
<feature type="strand" evidence="17">
    <location>
        <begin position="201"/>
        <end position="206"/>
    </location>
</feature>
<feature type="turn" evidence="17">
    <location>
        <begin position="207"/>
        <end position="209"/>
    </location>
</feature>
<feature type="strand" evidence="17">
    <location>
        <begin position="210"/>
        <end position="218"/>
    </location>
</feature>
<feature type="strand" evidence="17">
    <location>
        <begin position="223"/>
        <end position="226"/>
    </location>
</feature>
<feature type="helix" evidence="17">
    <location>
        <begin position="229"/>
        <end position="231"/>
    </location>
</feature>
<feature type="strand" evidence="17">
    <location>
        <begin position="233"/>
        <end position="240"/>
    </location>
</feature>
<feature type="turn" evidence="17">
    <location>
        <begin position="241"/>
        <end position="243"/>
    </location>
</feature>
<feature type="strand" evidence="17">
    <location>
        <begin position="244"/>
        <end position="249"/>
    </location>
</feature>
<feature type="strand" evidence="17">
    <location>
        <begin position="254"/>
        <end position="258"/>
    </location>
</feature>
<feature type="strand" evidence="17">
    <location>
        <begin position="267"/>
        <end position="271"/>
    </location>
</feature>
<feature type="strand" evidence="17">
    <location>
        <begin position="274"/>
        <end position="276"/>
    </location>
</feature>
<feature type="strand" evidence="17">
    <location>
        <begin position="278"/>
        <end position="284"/>
    </location>
</feature>
<feature type="turn" evidence="17">
    <location>
        <begin position="285"/>
        <end position="288"/>
    </location>
</feature>
<feature type="strand" evidence="17">
    <location>
        <begin position="289"/>
        <end position="294"/>
    </location>
</feature>
<feature type="strand" evidence="17">
    <location>
        <begin position="297"/>
        <end position="304"/>
    </location>
</feature>
<feature type="strand" evidence="17">
    <location>
        <begin position="308"/>
        <end position="314"/>
    </location>
</feature>
<feature type="helix" evidence="17">
    <location>
        <begin position="317"/>
        <end position="319"/>
    </location>
</feature>
<feature type="strand" evidence="17">
    <location>
        <begin position="321"/>
        <end position="327"/>
    </location>
</feature>
<feature type="strand" evidence="17">
    <location>
        <begin position="333"/>
        <end position="338"/>
    </location>
</feature>
<feature type="strand" evidence="17">
    <location>
        <begin position="343"/>
        <end position="348"/>
    </location>
</feature>
<feature type="strand" evidence="17">
    <location>
        <begin position="354"/>
        <end position="357"/>
    </location>
</feature>
<feature type="strand" evidence="17">
    <location>
        <begin position="360"/>
        <end position="366"/>
    </location>
</feature>
<feature type="strand" evidence="17">
    <location>
        <begin position="369"/>
        <end position="374"/>
    </location>
</feature>
<feature type="turn" evidence="17">
    <location>
        <begin position="375"/>
        <end position="378"/>
    </location>
</feature>
<feature type="strand" evidence="17">
    <location>
        <begin position="379"/>
        <end position="385"/>
    </location>
</feature>
<feature type="strand" evidence="17">
    <location>
        <begin position="391"/>
        <end position="395"/>
    </location>
</feature>
<feature type="strand" evidence="17">
    <location>
        <begin position="397"/>
        <end position="404"/>
    </location>
</feature>
<feature type="strand" evidence="17">
    <location>
        <begin position="407"/>
        <end position="413"/>
    </location>
</feature>
<feature type="strand" evidence="17">
    <location>
        <begin position="418"/>
        <end position="425"/>
    </location>
</feature>
<feature type="strand" evidence="17">
    <location>
        <begin position="432"/>
        <end position="436"/>
    </location>
</feature>
<feature type="strand" evidence="17">
    <location>
        <begin position="439"/>
        <end position="443"/>
    </location>
</feature>
<feature type="strand" evidence="17">
    <location>
        <begin position="448"/>
        <end position="454"/>
    </location>
</feature>
<feature type="strand" evidence="17">
    <location>
        <begin position="457"/>
        <end position="459"/>
    </location>
</feature>
<feature type="helix" evidence="17">
    <location>
        <begin position="462"/>
        <end position="465"/>
    </location>
</feature>
<feature type="strand" evidence="17">
    <location>
        <begin position="466"/>
        <end position="470"/>
    </location>
</feature>
<feature type="strand" evidence="17">
    <location>
        <begin position="478"/>
        <end position="483"/>
    </location>
</feature>
<feature type="strand" evidence="17">
    <location>
        <begin position="485"/>
        <end position="492"/>
    </location>
</feature>
<feature type="strand" evidence="17">
    <location>
        <begin position="495"/>
        <end position="501"/>
    </location>
</feature>
<feature type="turn" evidence="17">
    <location>
        <begin position="502"/>
        <end position="505"/>
    </location>
</feature>
<feature type="strand" evidence="17">
    <location>
        <begin position="506"/>
        <end position="512"/>
    </location>
</feature>
<feature type="strand" evidence="17">
    <location>
        <begin position="517"/>
        <end position="522"/>
    </location>
</feature>
<feature type="strand" evidence="17">
    <location>
        <begin position="524"/>
        <end position="533"/>
    </location>
</feature>
<feature type="strand" evidence="17">
    <location>
        <begin position="538"/>
        <end position="541"/>
    </location>
</feature>
<feature type="turn" evidence="17">
    <location>
        <begin position="543"/>
        <end position="545"/>
    </location>
</feature>
<feature type="strand" evidence="17">
    <location>
        <begin position="548"/>
        <end position="550"/>
    </location>
</feature>
<feature type="strand" evidence="17">
    <location>
        <begin position="560"/>
        <end position="563"/>
    </location>
</feature>
<feature type="helix" evidence="17">
    <location>
        <begin position="567"/>
        <end position="569"/>
    </location>
</feature>
<feature type="strand" evidence="17">
    <location>
        <begin position="572"/>
        <end position="576"/>
    </location>
</feature>
<feature type="strand" evidence="17">
    <location>
        <begin position="578"/>
        <end position="587"/>
    </location>
</feature>
<feature type="strand" evidence="17">
    <location>
        <begin position="595"/>
        <end position="603"/>
    </location>
</feature>
<feature type="strand" evidence="17">
    <location>
        <begin position="609"/>
        <end position="614"/>
    </location>
</feature>
<feature type="strand" evidence="17">
    <location>
        <begin position="617"/>
        <end position="621"/>
    </location>
</feature>
<feature type="strand" evidence="17">
    <location>
        <begin position="627"/>
        <end position="631"/>
    </location>
</feature>
<feature type="helix" evidence="17">
    <location>
        <begin position="633"/>
        <end position="638"/>
    </location>
</feature>
<feature type="helix" evidence="17">
    <location>
        <begin position="641"/>
        <end position="643"/>
    </location>
</feature>
<feature type="helix" evidence="17">
    <location>
        <begin position="646"/>
        <end position="658"/>
    </location>
</feature>
<feature type="helix" evidence="17">
    <location>
        <begin position="662"/>
        <end position="672"/>
    </location>
</feature>
<feature type="helix" evidence="17">
    <location>
        <begin position="675"/>
        <end position="687"/>
    </location>
</feature>
<feature type="helix" evidence="17">
    <location>
        <begin position="691"/>
        <end position="701"/>
    </location>
</feature>
<feature type="helix" evidence="17">
    <location>
        <begin position="704"/>
        <end position="713"/>
    </location>
</feature>
<feature type="helix" evidence="17">
    <location>
        <begin position="719"/>
        <end position="729"/>
    </location>
</feature>
<feature type="helix" evidence="17">
    <location>
        <begin position="733"/>
        <end position="742"/>
    </location>
</feature>
<feature type="helix" evidence="17">
    <location>
        <begin position="747"/>
        <end position="755"/>
    </location>
</feature>
<feature type="helix" evidence="17">
    <location>
        <begin position="759"/>
        <end position="769"/>
    </location>
</feature>
<feature type="helix" evidence="17">
    <location>
        <begin position="771"/>
        <end position="773"/>
    </location>
</feature>
<feature type="helix" evidence="17">
    <location>
        <begin position="774"/>
        <end position="788"/>
    </location>
</feature>
<feature type="helix" evidence="17">
    <location>
        <begin position="791"/>
        <end position="801"/>
    </location>
</feature>
<feature type="helix" evidence="17">
    <location>
        <begin position="807"/>
        <end position="823"/>
    </location>
</feature>
<feature type="helix" evidence="17">
    <location>
        <begin position="827"/>
        <end position="836"/>
    </location>
</feature>
<feature type="helix" evidence="17">
    <location>
        <begin position="840"/>
        <end position="852"/>
    </location>
</feature>
<feature type="helix" evidence="17">
    <location>
        <begin position="856"/>
        <end position="865"/>
    </location>
</feature>
<feature type="helix" evidence="17">
    <location>
        <begin position="869"/>
        <end position="878"/>
    </location>
</feature>
<feature type="helix" evidence="17">
    <location>
        <begin position="882"/>
        <end position="888"/>
    </location>
</feature>
<feature type="turn" evidence="17">
    <location>
        <begin position="889"/>
        <end position="891"/>
    </location>
</feature>
<feature type="helix" evidence="17">
    <location>
        <begin position="895"/>
        <end position="907"/>
    </location>
</feature>
<feature type="helix" evidence="17">
    <location>
        <begin position="911"/>
        <end position="920"/>
    </location>
</feature>
<feature type="helix" evidence="17">
    <location>
        <begin position="924"/>
        <end position="933"/>
    </location>
</feature>
<feature type="helix" evidence="17">
    <location>
        <begin position="938"/>
        <end position="945"/>
    </location>
</feature>
<feature type="turn" evidence="17">
    <location>
        <begin position="946"/>
        <end position="948"/>
    </location>
</feature>
<feature type="helix" evidence="17">
    <location>
        <begin position="951"/>
        <end position="964"/>
    </location>
</feature>
<feature type="helix" evidence="17">
    <location>
        <begin position="967"/>
        <end position="976"/>
    </location>
</feature>
<feature type="helix" evidence="17">
    <location>
        <begin position="980"/>
        <end position="989"/>
    </location>
</feature>
<feature type="helix" evidence="17">
    <location>
        <begin position="993"/>
        <end position="999"/>
    </location>
</feature>
<feature type="helix" evidence="17">
    <location>
        <begin position="1007"/>
        <end position="1019"/>
    </location>
</feature>
<feature type="helix" evidence="17">
    <location>
        <begin position="1023"/>
        <end position="1033"/>
    </location>
</feature>
<feature type="helix" evidence="17">
    <location>
        <begin position="1036"/>
        <end position="1044"/>
    </location>
</feature>
<feature type="helix" evidence="17">
    <location>
        <begin position="1051"/>
        <end position="1065"/>
    </location>
</feature>
<feature type="helix" evidence="17">
    <location>
        <begin position="1068"/>
        <end position="1078"/>
    </location>
</feature>
<feature type="turn" evidence="17">
    <location>
        <begin position="1079"/>
        <end position="1083"/>
    </location>
</feature>
<feature type="helix" evidence="17">
    <location>
        <begin position="1089"/>
        <end position="1098"/>
    </location>
</feature>
<feature type="helix" evidence="17">
    <location>
        <begin position="1102"/>
        <end position="1118"/>
    </location>
</feature>
<feature type="helix" evidence="17">
    <location>
        <begin position="1122"/>
        <end position="1138"/>
    </location>
</feature>
<feature type="helix" evidence="17">
    <location>
        <begin position="1145"/>
        <end position="1165"/>
    </location>
</feature>
<feature type="helix" evidence="17">
    <location>
        <begin position="1169"/>
        <end position="1180"/>
    </location>
</feature>
<feature type="helix" evidence="17">
    <location>
        <begin position="1181"/>
        <end position="1185"/>
    </location>
</feature>
<feature type="helix" evidence="17">
    <location>
        <begin position="1190"/>
        <end position="1204"/>
    </location>
</feature>
<feature type="helix" evidence="17">
    <location>
        <begin position="1207"/>
        <end position="1217"/>
    </location>
</feature>
<feature type="turn" evidence="17">
    <location>
        <begin position="1220"/>
        <end position="1222"/>
    </location>
</feature>
<feature type="helix" evidence="17">
    <location>
        <begin position="1223"/>
        <end position="1225"/>
    </location>
</feature>
<feature type="helix" evidence="17">
    <location>
        <begin position="1228"/>
        <end position="1239"/>
    </location>
</feature>
<feature type="strand" evidence="17">
    <location>
        <begin position="1250"/>
        <end position="1252"/>
    </location>
</feature>
<feature type="turn" evidence="17">
    <location>
        <begin position="1254"/>
        <end position="1256"/>
    </location>
</feature>
<feature type="strand" evidence="17">
    <location>
        <begin position="1259"/>
        <end position="1261"/>
    </location>
</feature>
<feature type="turn" evidence="17">
    <location>
        <begin position="1268"/>
        <end position="1270"/>
    </location>
</feature>
<feature type="turn" evidence="17">
    <location>
        <begin position="1278"/>
        <end position="1280"/>
    </location>
</feature>
<feature type="strand" evidence="17">
    <location>
        <begin position="1288"/>
        <end position="1291"/>
    </location>
</feature>
<feature type="turn" evidence="17">
    <location>
        <begin position="1293"/>
        <end position="1295"/>
    </location>
</feature>
<feature type="strand" evidence="17">
    <location>
        <begin position="1298"/>
        <end position="1300"/>
    </location>
</feature>
<feature type="helix" evidence="17">
    <location>
        <begin position="1301"/>
        <end position="1308"/>
    </location>
</feature>
<feature type="turn" evidence="17">
    <location>
        <begin position="1315"/>
        <end position="1317"/>
    </location>
</feature>
<feature type="helix" evidence="17">
    <location>
        <begin position="1323"/>
        <end position="1325"/>
    </location>
</feature>
<feature type="helix" evidence="17">
    <location>
        <begin position="1333"/>
        <end position="1335"/>
    </location>
</feature>
<feature type="helix" evidence="17">
    <location>
        <begin position="1339"/>
        <end position="1341"/>
    </location>
</feature>
<proteinExistence type="evidence at protein level"/>
<evidence type="ECO:0000250" key="1">
    <source>
        <dbReference type="UniProtKB" id="Q3UGF1"/>
    </source>
</evidence>
<evidence type="ECO:0000269" key="2">
    <source>
    </source>
</evidence>
<evidence type="ECO:0000269" key="3">
    <source>
    </source>
</evidence>
<evidence type="ECO:0000269" key="4">
    <source>
    </source>
</evidence>
<evidence type="ECO:0000269" key="5">
    <source>
    </source>
</evidence>
<evidence type="ECO:0000269" key="6">
    <source>
    </source>
</evidence>
<evidence type="ECO:0000269" key="7">
    <source>
    </source>
</evidence>
<evidence type="ECO:0000269" key="8">
    <source>
    </source>
</evidence>
<evidence type="ECO:0000269" key="9">
    <source>
    </source>
</evidence>
<evidence type="ECO:0000269" key="10">
    <source>
    </source>
</evidence>
<evidence type="ECO:0000303" key="11">
    <source>
    </source>
</evidence>
<evidence type="ECO:0000303" key="12">
    <source>
    </source>
</evidence>
<evidence type="ECO:0000303" key="13">
    <source>
    </source>
</evidence>
<evidence type="ECO:0000303" key="14">
    <source>
    </source>
</evidence>
<evidence type="ECO:0000305" key="15"/>
<evidence type="ECO:0000312" key="16">
    <source>
        <dbReference type="HGNC" id="HGNC:18340"/>
    </source>
</evidence>
<evidence type="ECO:0007829" key="17">
    <source>
        <dbReference type="PDB" id="8BBG"/>
    </source>
</evidence>
<gene>
    <name evidence="16" type="primary">WDR19</name>
    <name evidence="13 14" type="synonym">IFT144</name>
    <name type="synonym">KIAA1638</name>
</gene>
<keyword id="KW-0002">3D-structure</keyword>
<keyword id="KW-0025">Alternative splicing</keyword>
<keyword id="KW-0966">Cell projection</keyword>
<keyword id="KW-1186">Ciliopathy</keyword>
<keyword id="KW-0969">Cilium</keyword>
<keyword id="KW-0970">Cilium biogenesis/degradation</keyword>
<keyword id="KW-0963">Cytoplasm</keyword>
<keyword id="KW-0206">Cytoskeleton</keyword>
<keyword id="KW-0225">Disease variant</keyword>
<keyword id="KW-0038">Ectodermal dysplasia</keyword>
<keyword id="KW-0282">Flagellum</keyword>
<keyword id="KW-0901">Leber congenital amaurosis</keyword>
<keyword id="KW-0983">Nephronophthisis</keyword>
<keyword id="KW-1267">Proteomics identification</keyword>
<keyword id="KW-1185">Reference proteome</keyword>
<keyword id="KW-0677">Repeat</keyword>
<keyword id="KW-0980">Senior-Loken syndrome</keyword>
<keyword id="KW-0802">TPR repeat</keyword>
<keyword id="KW-0853">WD repeat</keyword>
<protein>
    <recommendedName>
        <fullName evidence="15">WD repeat-containing protein 19</fullName>
    </recommendedName>
    <alternativeName>
        <fullName>Intraflagellar transport 144 homolog</fullName>
    </alternativeName>
</protein>
<reference key="1">
    <citation type="journal article" date="2003" name="Genomics">
        <title>Isolation and characterization of human and mouse WDR19,a novel WD-repeat protein exhibiting androgen-regulated expression in prostate epithelium.</title>
        <authorList>
            <person name="Lin B."/>
            <person name="White J.T."/>
            <person name="Utleg A.G."/>
            <person name="Wang S."/>
            <person name="Ferguson C."/>
            <person name="True L.D."/>
            <person name="Vessella R."/>
            <person name="Hood L."/>
            <person name="Nelson P.S."/>
        </authorList>
    </citation>
    <scope>NUCLEOTIDE SEQUENCE [MRNA] (ISOFORM 1)</scope>
    <scope>ALTERNATIVE SPLICING</scope>
    <scope>TISSUE SPECIFICITY</scope>
    <scope>INDUCTION</scope>
</reference>
<reference key="2">
    <citation type="journal article" date="2004" name="Nat. Genet.">
        <title>Complete sequencing and characterization of 21,243 full-length human cDNAs.</title>
        <authorList>
            <person name="Ota T."/>
            <person name="Suzuki Y."/>
            <person name="Nishikawa T."/>
            <person name="Otsuki T."/>
            <person name="Sugiyama T."/>
            <person name="Irie R."/>
            <person name="Wakamatsu A."/>
            <person name="Hayashi K."/>
            <person name="Sato H."/>
            <person name="Nagai K."/>
            <person name="Kimura K."/>
            <person name="Makita H."/>
            <person name="Sekine M."/>
            <person name="Obayashi M."/>
            <person name="Nishi T."/>
            <person name="Shibahara T."/>
            <person name="Tanaka T."/>
            <person name="Ishii S."/>
            <person name="Yamamoto J."/>
            <person name="Saito K."/>
            <person name="Kawai Y."/>
            <person name="Isono Y."/>
            <person name="Nakamura Y."/>
            <person name="Nagahari K."/>
            <person name="Murakami K."/>
            <person name="Yasuda T."/>
            <person name="Iwayanagi T."/>
            <person name="Wagatsuma M."/>
            <person name="Shiratori A."/>
            <person name="Sudo H."/>
            <person name="Hosoiri T."/>
            <person name="Kaku Y."/>
            <person name="Kodaira H."/>
            <person name="Kondo H."/>
            <person name="Sugawara M."/>
            <person name="Takahashi M."/>
            <person name="Kanda K."/>
            <person name="Yokoi T."/>
            <person name="Furuya T."/>
            <person name="Kikkawa E."/>
            <person name="Omura Y."/>
            <person name="Abe K."/>
            <person name="Kamihara K."/>
            <person name="Katsuta N."/>
            <person name="Sato K."/>
            <person name="Tanikawa M."/>
            <person name="Yamazaki M."/>
            <person name="Ninomiya K."/>
            <person name="Ishibashi T."/>
            <person name="Yamashita H."/>
            <person name="Murakawa K."/>
            <person name="Fujimori K."/>
            <person name="Tanai H."/>
            <person name="Kimata M."/>
            <person name="Watanabe M."/>
            <person name="Hiraoka S."/>
            <person name="Chiba Y."/>
            <person name="Ishida S."/>
            <person name="Ono Y."/>
            <person name="Takiguchi S."/>
            <person name="Watanabe S."/>
            <person name="Yosida M."/>
            <person name="Hotuta T."/>
            <person name="Kusano J."/>
            <person name="Kanehori K."/>
            <person name="Takahashi-Fujii A."/>
            <person name="Hara H."/>
            <person name="Tanase T.-O."/>
            <person name="Nomura Y."/>
            <person name="Togiya S."/>
            <person name="Komai F."/>
            <person name="Hara R."/>
            <person name="Takeuchi K."/>
            <person name="Arita M."/>
            <person name="Imose N."/>
            <person name="Musashino K."/>
            <person name="Yuuki H."/>
            <person name="Oshima A."/>
            <person name="Sasaki N."/>
            <person name="Aotsuka S."/>
            <person name="Yoshikawa Y."/>
            <person name="Matsunawa H."/>
            <person name="Ichihara T."/>
            <person name="Shiohata N."/>
            <person name="Sano S."/>
            <person name="Moriya S."/>
            <person name="Momiyama H."/>
            <person name="Satoh N."/>
            <person name="Takami S."/>
            <person name="Terashima Y."/>
            <person name="Suzuki O."/>
            <person name="Nakagawa S."/>
            <person name="Senoh A."/>
            <person name="Mizoguchi H."/>
            <person name="Goto Y."/>
            <person name="Shimizu F."/>
            <person name="Wakebe H."/>
            <person name="Hishigaki H."/>
            <person name="Watanabe T."/>
            <person name="Sugiyama A."/>
            <person name="Takemoto M."/>
            <person name="Kawakami B."/>
            <person name="Yamazaki M."/>
            <person name="Watanabe K."/>
            <person name="Kumagai A."/>
            <person name="Itakura S."/>
            <person name="Fukuzumi Y."/>
            <person name="Fujimori Y."/>
            <person name="Komiyama M."/>
            <person name="Tashiro H."/>
            <person name="Tanigami A."/>
            <person name="Fujiwara T."/>
            <person name="Ono T."/>
            <person name="Yamada K."/>
            <person name="Fujii Y."/>
            <person name="Ozaki K."/>
            <person name="Hirao M."/>
            <person name="Ohmori Y."/>
            <person name="Kawabata A."/>
            <person name="Hikiji T."/>
            <person name="Kobatake N."/>
            <person name="Inagaki H."/>
            <person name="Ikema Y."/>
            <person name="Okamoto S."/>
            <person name="Okitani R."/>
            <person name="Kawakami T."/>
            <person name="Noguchi S."/>
            <person name="Itoh T."/>
            <person name="Shigeta K."/>
            <person name="Senba T."/>
            <person name="Matsumura K."/>
            <person name="Nakajima Y."/>
            <person name="Mizuno T."/>
            <person name="Morinaga M."/>
            <person name="Sasaki M."/>
            <person name="Togashi T."/>
            <person name="Oyama M."/>
            <person name="Hata H."/>
            <person name="Watanabe M."/>
            <person name="Komatsu T."/>
            <person name="Mizushima-Sugano J."/>
            <person name="Satoh T."/>
            <person name="Shirai Y."/>
            <person name="Takahashi Y."/>
            <person name="Nakagawa K."/>
            <person name="Okumura K."/>
            <person name="Nagase T."/>
            <person name="Nomura N."/>
            <person name="Kikuchi H."/>
            <person name="Masuho Y."/>
            <person name="Yamashita R."/>
            <person name="Nakai K."/>
            <person name="Yada T."/>
            <person name="Nakamura Y."/>
            <person name="Ohara O."/>
            <person name="Isogai T."/>
            <person name="Sugano S."/>
        </authorList>
    </citation>
    <scope>NUCLEOTIDE SEQUENCE [LARGE SCALE MRNA] (ISOFORM 2)</scope>
    <source>
        <tissue>Lung</tissue>
    </source>
</reference>
<reference key="3">
    <citation type="journal article" date="2005" name="Nature">
        <title>Generation and annotation of the DNA sequences of human chromosomes 2 and 4.</title>
        <authorList>
            <person name="Hillier L.W."/>
            <person name="Graves T.A."/>
            <person name="Fulton R.S."/>
            <person name="Fulton L.A."/>
            <person name="Pepin K.H."/>
            <person name="Minx P."/>
            <person name="Wagner-McPherson C."/>
            <person name="Layman D."/>
            <person name="Wylie K."/>
            <person name="Sekhon M."/>
            <person name="Becker M.C."/>
            <person name="Fewell G.A."/>
            <person name="Delehaunty K.D."/>
            <person name="Miner T.L."/>
            <person name="Nash W.E."/>
            <person name="Kremitzki C."/>
            <person name="Oddy L."/>
            <person name="Du H."/>
            <person name="Sun H."/>
            <person name="Bradshaw-Cordum H."/>
            <person name="Ali J."/>
            <person name="Carter J."/>
            <person name="Cordes M."/>
            <person name="Harris A."/>
            <person name="Isak A."/>
            <person name="van Brunt A."/>
            <person name="Nguyen C."/>
            <person name="Du F."/>
            <person name="Courtney L."/>
            <person name="Kalicki J."/>
            <person name="Ozersky P."/>
            <person name="Abbott S."/>
            <person name="Armstrong J."/>
            <person name="Belter E.A."/>
            <person name="Caruso L."/>
            <person name="Cedroni M."/>
            <person name="Cotton M."/>
            <person name="Davidson T."/>
            <person name="Desai A."/>
            <person name="Elliott G."/>
            <person name="Erb T."/>
            <person name="Fronick C."/>
            <person name="Gaige T."/>
            <person name="Haakenson W."/>
            <person name="Haglund K."/>
            <person name="Holmes A."/>
            <person name="Harkins R."/>
            <person name="Kim K."/>
            <person name="Kruchowski S.S."/>
            <person name="Strong C.M."/>
            <person name="Grewal N."/>
            <person name="Goyea E."/>
            <person name="Hou S."/>
            <person name="Levy A."/>
            <person name="Martinka S."/>
            <person name="Mead K."/>
            <person name="McLellan M.D."/>
            <person name="Meyer R."/>
            <person name="Randall-Maher J."/>
            <person name="Tomlinson C."/>
            <person name="Dauphin-Kohlberg S."/>
            <person name="Kozlowicz-Reilly A."/>
            <person name="Shah N."/>
            <person name="Swearengen-Shahid S."/>
            <person name="Snider J."/>
            <person name="Strong J.T."/>
            <person name="Thompson J."/>
            <person name="Yoakum M."/>
            <person name="Leonard S."/>
            <person name="Pearman C."/>
            <person name="Trani L."/>
            <person name="Radionenko M."/>
            <person name="Waligorski J.E."/>
            <person name="Wang C."/>
            <person name="Rock S.M."/>
            <person name="Tin-Wollam A.-M."/>
            <person name="Maupin R."/>
            <person name="Latreille P."/>
            <person name="Wendl M.C."/>
            <person name="Yang S.-P."/>
            <person name="Pohl C."/>
            <person name="Wallis J.W."/>
            <person name="Spieth J."/>
            <person name="Bieri T.A."/>
            <person name="Berkowicz N."/>
            <person name="Nelson J.O."/>
            <person name="Osborne J."/>
            <person name="Ding L."/>
            <person name="Meyer R."/>
            <person name="Sabo A."/>
            <person name="Shotland Y."/>
            <person name="Sinha P."/>
            <person name="Wohldmann P.E."/>
            <person name="Cook L.L."/>
            <person name="Hickenbotham M.T."/>
            <person name="Eldred J."/>
            <person name="Williams D."/>
            <person name="Jones T.A."/>
            <person name="She X."/>
            <person name="Ciccarelli F.D."/>
            <person name="Izaurralde E."/>
            <person name="Taylor J."/>
            <person name="Schmutz J."/>
            <person name="Myers R.M."/>
            <person name="Cox D.R."/>
            <person name="Huang X."/>
            <person name="McPherson J.D."/>
            <person name="Mardis E.R."/>
            <person name="Clifton S.W."/>
            <person name="Warren W.C."/>
            <person name="Chinwalla A.T."/>
            <person name="Eddy S.R."/>
            <person name="Marra M.A."/>
            <person name="Ovcharenko I."/>
            <person name="Furey T.S."/>
            <person name="Miller W."/>
            <person name="Eichler E.E."/>
            <person name="Bork P."/>
            <person name="Suyama M."/>
            <person name="Torrents D."/>
            <person name="Waterston R.H."/>
            <person name="Wilson R.K."/>
        </authorList>
    </citation>
    <scope>NUCLEOTIDE SEQUENCE [LARGE SCALE GENOMIC DNA]</scope>
</reference>
<reference key="4">
    <citation type="submission" date="2005-07" db="EMBL/GenBank/DDBJ databases">
        <authorList>
            <person name="Mural R.J."/>
            <person name="Istrail S."/>
            <person name="Sutton G.G."/>
            <person name="Florea L."/>
            <person name="Halpern A.L."/>
            <person name="Mobarry C.M."/>
            <person name="Lippert R."/>
            <person name="Walenz B."/>
            <person name="Shatkay H."/>
            <person name="Dew I."/>
            <person name="Miller J.R."/>
            <person name="Flanigan M.J."/>
            <person name="Edwards N.J."/>
            <person name="Bolanos R."/>
            <person name="Fasulo D."/>
            <person name="Halldorsson B.V."/>
            <person name="Hannenhalli S."/>
            <person name="Turner R."/>
            <person name="Yooseph S."/>
            <person name="Lu F."/>
            <person name="Nusskern D.R."/>
            <person name="Shue B.C."/>
            <person name="Zheng X.H."/>
            <person name="Zhong F."/>
            <person name="Delcher A.L."/>
            <person name="Huson D.H."/>
            <person name="Kravitz S.A."/>
            <person name="Mouchard L."/>
            <person name="Reinert K."/>
            <person name="Remington K.A."/>
            <person name="Clark A.G."/>
            <person name="Waterman M.S."/>
            <person name="Eichler E.E."/>
            <person name="Adams M.D."/>
            <person name="Hunkapiller M.W."/>
            <person name="Myers E.W."/>
            <person name="Venter J.C."/>
        </authorList>
    </citation>
    <scope>NUCLEOTIDE SEQUENCE [LARGE SCALE GENOMIC DNA]</scope>
</reference>
<reference key="5">
    <citation type="journal article" date="2004" name="Genome Res.">
        <title>The status, quality, and expansion of the NIH full-length cDNA project: the Mammalian Gene Collection (MGC).</title>
        <authorList>
            <consortium name="The MGC Project Team"/>
        </authorList>
    </citation>
    <scope>NUCLEOTIDE SEQUENCE [LARGE SCALE MRNA] (ISOFORM 2)</scope>
    <source>
        <tissue>Eye</tissue>
    </source>
</reference>
<reference key="6">
    <citation type="journal article" date="2000" name="DNA Res.">
        <title>Prediction of the coding sequences of unidentified human genes. XVIII. The complete sequences of 100 new cDNA clones from brain which code for large proteins in vitro.</title>
        <authorList>
            <person name="Nagase T."/>
            <person name="Kikuno R."/>
            <person name="Nakayama M."/>
            <person name="Hirosawa M."/>
            <person name="Ohara O."/>
        </authorList>
    </citation>
    <scope>NUCLEOTIDE SEQUENCE [LARGE SCALE MRNA] OF 335-1239</scope>
    <source>
        <tissue>Brain</tissue>
    </source>
</reference>
<reference key="7">
    <citation type="journal article" date="2002" name="DNA Res.">
        <title>Construction of expression-ready cDNA clones for KIAA genes: manual curation of 330 KIAA cDNA clones.</title>
        <authorList>
            <person name="Nakajima D."/>
            <person name="Okazaki N."/>
            <person name="Yamakawa H."/>
            <person name="Kikuno R."/>
            <person name="Ohara O."/>
            <person name="Nagase T."/>
        </authorList>
    </citation>
    <scope>SEQUENCE REVISION</scope>
</reference>
<reference key="8">
    <citation type="journal article" date="2010" name="Genes Dev.">
        <title>TULP3 bridges the IFT-A complex and membrane phosphoinositides to promote trafficking of G protein-coupled receptors into primary cilia.</title>
        <authorList>
            <person name="Mukhopadhyay S."/>
            <person name="Wen X."/>
            <person name="Chih B."/>
            <person name="Nelson C.D."/>
            <person name="Lane W.S."/>
            <person name="Scales S.J."/>
            <person name="Jackson P.K."/>
        </authorList>
    </citation>
    <scope>FUNCTION</scope>
    <scope>IDENTIFICATION IN THE IFT-A COMPLEX</scope>
</reference>
<reference key="9">
    <citation type="journal article" date="2017" name="Mol. Biol. Cell">
        <title>Intraflagellar transport-A complex mediates ciliary entry and retrograde trafficking of ciliary G protein-coupled receptors.</title>
        <authorList>
            <person name="Hirano T."/>
            <person name="Katoh Y."/>
            <person name="Nakayama K."/>
        </authorList>
    </citation>
    <scope>FUNCTION</scope>
    <scope>IDENTIFICATION IN THE IFT-A COMPLEX</scope>
</reference>
<reference key="10">
    <citation type="journal article" date="2018" name="Hum. Mol. Genet.">
        <title>Ciliopathy-associated mutations of IFT122 impair ciliary protein trafficking but not ciliogenesis.</title>
        <authorList>
            <person name="Takahara M."/>
            <person name="Katoh Y."/>
            <person name="Nakamura K."/>
            <person name="Hirano T."/>
            <person name="Sugawa M."/>
            <person name="Tsurumi Y."/>
            <person name="Nakayama K."/>
        </authorList>
    </citation>
    <scope>IDENTIFICATION IN THE IFT-A COMPLEX</scope>
</reference>
<reference key="11">
    <citation type="journal article" date="2013" name="Clin. Genet.">
        <title>WDR19: an ancient, retrograde, intraflagellar ciliary protein is mutated in autosomal recessive retinitis pigmentosa and in Senior-Loken syndrome.</title>
        <authorList>
            <person name="Coussa R.G."/>
            <person name="Otto E.A."/>
            <person name="Gee H.Y."/>
            <person name="Arthurs P."/>
            <person name="Ren H."/>
            <person name="Lopez I."/>
            <person name="Keser V."/>
            <person name="Fu Q."/>
            <person name="Faingold R."/>
            <person name="Khan A."/>
            <person name="Schwartzentruber J."/>
            <person name="Majewski J."/>
            <person name="Hildebrandt F."/>
            <person name="Koenekoop R.K."/>
        </authorList>
    </citation>
    <scope>INVOLVEMENT IN SLSN8</scope>
    <scope>VARIANTS SLSN8 PRO-30; ASP-68; GLU-109; CYS-272; HIS-493 AND SER-710</scope>
</reference>
<reference key="12">
    <citation type="journal article" date="2013" name="Hum. Genet.">
        <title>Identification of 99 novel mutations in a worldwide cohort of 1,056 patients with a nephronophthisis-related ciliopathy.</title>
        <authorList>
            <person name="Halbritter J."/>
            <person name="Porath J.D."/>
            <person name="Diaz K.A."/>
            <person name="Braun D.A."/>
            <person name="Kohl S."/>
            <person name="Chaki M."/>
            <person name="Allen S.J."/>
            <person name="Soliman N.A."/>
            <person name="Hildebrandt F."/>
            <person name="Otto E.A."/>
        </authorList>
    </citation>
    <scope>INVOLVEMENT IN SLSN8</scope>
    <scope>VARIANTS SLSN8 HIS-493; GLN-1178 AND LYS-1235</scope>
</reference>
<reference key="13">
    <citation type="journal article" date="2015" name="PLoS ONE">
        <title>Characterization of tetratricopeptide repeat-containing proteins critical for cilia formation and function.</title>
        <authorList>
            <person name="Xu Y."/>
            <person name="Cao J."/>
            <person name="Huang S."/>
            <person name="Feng D."/>
            <person name="Zhang W."/>
            <person name="Zhu X."/>
            <person name="Yan X."/>
        </authorList>
    </citation>
    <scope>INTERACTION WITH TTC25</scope>
</reference>
<reference key="14">
    <citation type="journal article" date="2011" name="Am. J. Hum. Genet.">
        <title>Ciliopathies with skeletal anomalies and renal insufficiency due to mutations in the IFT-A gene WDR19.</title>
        <authorList>
            <person name="Bredrup C."/>
            <person name="Saunier S."/>
            <person name="Oud M.M."/>
            <person name="Fiskerstrand T."/>
            <person name="Hoischen A."/>
            <person name="Brackman D."/>
            <person name="Leh S.M."/>
            <person name="Midtbo M."/>
            <person name="Filhol E."/>
            <person name="Bole-Feysot C."/>
            <person name="Nitschke P."/>
            <person name="Gilissen C."/>
            <person name="Haugen O.H."/>
            <person name="Sanders J.S."/>
            <person name="Stolte-Dijkstra I."/>
            <person name="Mans D.A."/>
            <person name="Steenbergen E.J."/>
            <person name="Hamel B.C."/>
            <person name="Matignon M."/>
            <person name="Pfundt R."/>
            <person name="Jeanpierre C."/>
            <person name="Boman H."/>
            <person name="Rodahl E."/>
            <person name="Veltman J.A."/>
            <person name="Knappskog P.M."/>
            <person name="Knoers N.V."/>
            <person name="Roepman R."/>
            <person name="Arts H.H."/>
        </authorList>
    </citation>
    <scope>VARIANT SRTD5 PRO-7</scope>
    <scope>VARIANT NPHP13 GLY-345</scope>
    <scope>VARIANT CED4 SER-710</scope>
</reference>
<reference key="15">
    <citation type="journal article" date="2020" name="J. Assist. Reprod. Genet.">
        <title>A novel homozygous mutation in WDR19 induces disorganization of microtubules in sperm flagella and nonsyndromic asthenoteratospermia.</title>
        <authorList>
            <person name="Ni X."/>
            <person name="Wang J."/>
            <person name="Lv M."/>
            <person name="Liu C."/>
            <person name="Zhong Y."/>
            <person name="Tian S."/>
            <person name="Wu H."/>
            <person name="Cheng H."/>
            <person name="Gao Y."/>
            <person name="Tan Q."/>
            <person name="Chen B."/>
            <person name="Li Q."/>
            <person name="Song B."/>
            <person name="Wei Z."/>
            <person name="Zhou P."/>
            <person name="He X."/>
            <person name="Zhang F."/>
            <person name="Cao Y."/>
        </authorList>
    </citation>
    <scope>VARIANT SPGF72 GLU-1271</scope>
    <scope>CHARACTERIZATION OF VARIANT SPGF72 GLU-1271</scope>
    <scope>SUBCELLULAR LOCATION</scope>
</reference>